<organism>
    <name type="scientific">Oryza sativa subsp. japonica</name>
    <name type="common">Rice</name>
    <dbReference type="NCBI Taxonomy" id="39947"/>
    <lineage>
        <taxon>Eukaryota</taxon>
        <taxon>Viridiplantae</taxon>
        <taxon>Streptophyta</taxon>
        <taxon>Embryophyta</taxon>
        <taxon>Tracheophyta</taxon>
        <taxon>Spermatophyta</taxon>
        <taxon>Magnoliopsida</taxon>
        <taxon>Liliopsida</taxon>
        <taxon>Poales</taxon>
        <taxon>Poaceae</taxon>
        <taxon>BOP clade</taxon>
        <taxon>Oryzoideae</taxon>
        <taxon>Oryzeae</taxon>
        <taxon>Oryzinae</taxon>
        <taxon>Oryza</taxon>
        <taxon>Oryza sativa</taxon>
    </lineage>
</organism>
<evidence type="ECO:0000250" key="1">
    <source>
        <dbReference type="UniProtKB" id="P68137"/>
    </source>
</evidence>
<evidence type="ECO:0000305" key="2"/>
<protein>
    <recommendedName>
        <fullName>Actin-2</fullName>
        <ecNumber evidence="1">3.6.4.-</ecNumber>
    </recommendedName>
</protein>
<name>ACT2_ORYSJ</name>
<accession>A3C6D7</accession>
<accession>A0A0P0XW73</accession>
<accession>P17298</accession>
<accession>Q0IWG7</accession>
<accession>Q7XCZ1</accession>
<accession>Q94GX5</accession>
<gene>
    <name type="primary">ACT2</name>
    <name type="synonym">AC2</name>
    <name type="synonym">RAC2</name>
    <name type="ordered locus">Os10g0510000</name>
    <name type="ordered locus">LOC_Os10g36650</name>
    <name type="ORF">OsJ_030859</name>
    <name type="ORF">OSJNBa0005K07.1</name>
</gene>
<sequence length="377" mass="41680">MADAEDIQPLVCDNGTGMVKAGFAGDDAPRAVFPSIVGRPRHTGVMVGMGQKDAYVGDEAQSKRGILTLKYPIEHGIVSNWDDMEKIWHHTFYNELRVAPEEHPILLTEAPLNPKANREKMTQIMFETFSVPAMYVAIQAVLSLYASGRTTGIVLDSGDGVSHTVPIYEGYALPHAILRLDLAGRDLTDSLMKILTERGYSFTTSAEREIVRDIKEKLAYVALDYEQELETAKSSSSVEKSYELPDGQVITIGAERFRCPEVMFQPSLIGMEAPGIHETTYNSIMKCDVDIRKDLYGNIVLSGGSTMFPGIADRMSKEITALAPSSMKIKVVAPPERKYSVWIGGSILASLSTFQQMWISRAEYEESGPAIVHRKCF</sequence>
<feature type="chain" id="PRO_0000088971" description="Actin-2">
    <location>
        <begin position="1"/>
        <end position="377"/>
    </location>
</feature>
<feature type="sequence conflict" description="In Ref. 6; AK070531." evidence="2" ref="6">
    <original>D</original>
    <variation>G</variation>
    <location>
        <position position="186"/>
    </location>
</feature>
<keyword id="KW-0067">ATP-binding</keyword>
<keyword id="KW-0963">Cytoplasm</keyword>
<keyword id="KW-0206">Cytoskeleton</keyword>
<keyword id="KW-0378">Hydrolase</keyword>
<keyword id="KW-0547">Nucleotide-binding</keyword>
<keyword id="KW-1185">Reference proteome</keyword>
<reference key="1">
    <citation type="journal article" date="2003" name="Science">
        <title>In-depth view of structure, activity, and evolution of rice chromosome 10.</title>
        <authorList>
            <person name="Yu Y."/>
            <person name="Rambo T."/>
            <person name="Currie J."/>
            <person name="Saski C."/>
            <person name="Kim H.-R."/>
            <person name="Collura K."/>
            <person name="Thompson S."/>
            <person name="Simmons J."/>
            <person name="Yang T.-J."/>
            <person name="Nah G."/>
            <person name="Patel A.J."/>
            <person name="Thurmond S."/>
            <person name="Henry D."/>
            <person name="Oates R."/>
            <person name="Palmer M."/>
            <person name="Pries G."/>
            <person name="Gibson J."/>
            <person name="Anderson H."/>
            <person name="Paradkar M."/>
            <person name="Crane L."/>
            <person name="Dale J."/>
            <person name="Carver M.B."/>
            <person name="Wood T."/>
            <person name="Frisch D."/>
            <person name="Engler F."/>
            <person name="Soderlund C."/>
            <person name="Palmer L.E."/>
            <person name="Teytelman L."/>
            <person name="Nascimento L."/>
            <person name="De la Bastide M."/>
            <person name="Spiegel L."/>
            <person name="Ware D."/>
            <person name="O'Shaughnessy A."/>
            <person name="Dike S."/>
            <person name="Dedhia N."/>
            <person name="Preston R."/>
            <person name="Huang E."/>
            <person name="Ferraro K."/>
            <person name="Kuit K."/>
            <person name="Miller B."/>
            <person name="Zutavern T."/>
            <person name="Katzenberger F."/>
            <person name="Muller S."/>
            <person name="Balija V."/>
            <person name="Martienssen R.A."/>
            <person name="Stein L."/>
            <person name="Minx P."/>
            <person name="Johnson D."/>
            <person name="Cordum H."/>
            <person name="Mardis E."/>
            <person name="Cheng Z."/>
            <person name="Jiang J."/>
            <person name="Wilson R."/>
            <person name="McCombie W.R."/>
            <person name="Wing R.A."/>
            <person name="Yuan Q."/>
            <person name="Ouyang S."/>
            <person name="Liu J."/>
            <person name="Jones K.M."/>
            <person name="Gansberger K."/>
            <person name="Moffat K."/>
            <person name="Hill J."/>
            <person name="Tsitrin T."/>
            <person name="Overton L."/>
            <person name="Bera J."/>
            <person name="Kim M."/>
            <person name="Jin S."/>
            <person name="Tallon L."/>
            <person name="Ciecko A."/>
            <person name="Pai G."/>
            <person name="Van Aken S."/>
            <person name="Utterback T."/>
            <person name="Reidmuller S."/>
            <person name="Bormann J."/>
            <person name="Feldblyum T."/>
            <person name="Hsiao J."/>
            <person name="Zismann V."/>
            <person name="Blunt S."/>
            <person name="de Vazeille A.R."/>
            <person name="Shaffer T."/>
            <person name="Koo H."/>
            <person name="Suh B."/>
            <person name="Yang Q."/>
            <person name="Haas B."/>
            <person name="Peterson J."/>
            <person name="Pertea M."/>
            <person name="Volfovsky N."/>
            <person name="Wortman J."/>
            <person name="White O."/>
            <person name="Salzberg S.L."/>
            <person name="Fraser C.M."/>
            <person name="Buell C.R."/>
            <person name="Messing J."/>
            <person name="Song R."/>
            <person name="Fuks G."/>
            <person name="Llaca V."/>
            <person name="Kovchak S."/>
            <person name="Young S."/>
            <person name="Bowers J.E."/>
            <person name="Paterson A.H."/>
            <person name="Johns M.A."/>
            <person name="Mao L."/>
            <person name="Pan H."/>
            <person name="Dean R.A."/>
        </authorList>
    </citation>
    <scope>NUCLEOTIDE SEQUENCE [LARGE SCALE GENOMIC DNA]</scope>
    <source>
        <strain>cv. Nipponbare</strain>
    </source>
</reference>
<reference key="2">
    <citation type="journal article" date="2005" name="Nature">
        <title>The map-based sequence of the rice genome.</title>
        <authorList>
            <consortium name="International rice genome sequencing project (IRGSP)"/>
        </authorList>
    </citation>
    <scope>NUCLEOTIDE SEQUENCE [LARGE SCALE GENOMIC DNA]</scope>
    <source>
        <strain>cv. Nipponbare</strain>
    </source>
</reference>
<reference key="3">
    <citation type="journal article" date="2008" name="Nucleic Acids Res.">
        <title>The rice annotation project database (RAP-DB): 2008 update.</title>
        <authorList>
            <consortium name="The rice annotation project (RAP)"/>
        </authorList>
    </citation>
    <scope>GENOME REANNOTATION</scope>
    <source>
        <strain>cv. Nipponbare</strain>
    </source>
</reference>
<reference key="4">
    <citation type="journal article" date="2013" name="Rice">
        <title>Improvement of the Oryza sativa Nipponbare reference genome using next generation sequence and optical map data.</title>
        <authorList>
            <person name="Kawahara Y."/>
            <person name="de la Bastide M."/>
            <person name="Hamilton J.P."/>
            <person name="Kanamori H."/>
            <person name="McCombie W.R."/>
            <person name="Ouyang S."/>
            <person name="Schwartz D.C."/>
            <person name="Tanaka T."/>
            <person name="Wu J."/>
            <person name="Zhou S."/>
            <person name="Childs K.L."/>
            <person name="Davidson R.M."/>
            <person name="Lin H."/>
            <person name="Quesada-Ocampo L."/>
            <person name="Vaillancourt B."/>
            <person name="Sakai H."/>
            <person name="Lee S.S."/>
            <person name="Kim J."/>
            <person name="Numa H."/>
            <person name="Itoh T."/>
            <person name="Buell C.R."/>
            <person name="Matsumoto T."/>
        </authorList>
    </citation>
    <scope>GENOME REANNOTATION</scope>
    <source>
        <strain>cv. Nipponbare</strain>
    </source>
</reference>
<reference key="5">
    <citation type="journal article" date="2005" name="PLoS Biol.">
        <title>The genomes of Oryza sativa: a history of duplications.</title>
        <authorList>
            <person name="Yu J."/>
            <person name="Wang J."/>
            <person name="Lin W."/>
            <person name="Li S."/>
            <person name="Li H."/>
            <person name="Zhou J."/>
            <person name="Ni P."/>
            <person name="Dong W."/>
            <person name="Hu S."/>
            <person name="Zeng C."/>
            <person name="Zhang J."/>
            <person name="Zhang Y."/>
            <person name="Li R."/>
            <person name="Xu Z."/>
            <person name="Li S."/>
            <person name="Li X."/>
            <person name="Zheng H."/>
            <person name="Cong L."/>
            <person name="Lin L."/>
            <person name="Yin J."/>
            <person name="Geng J."/>
            <person name="Li G."/>
            <person name="Shi J."/>
            <person name="Liu J."/>
            <person name="Lv H."/>
            <person name="Li J."/>
            <person name="Wang J."/>
            <person name="Deng Y."/>
            <person name="Ran L."/>
            <person name="Shi X."/>
            <person name="Wang X."/>
            <person name="Wu Q."/>
            <person name="Li C."/>
            <person name="Ren X."/>
            <person name="Wang J."/>
            <person name="Wang X."/>
            <person name="Li D."/>
            <person name="Liu D."/>
            <person name="Zhang X."/>
            <person name="Ji Z."/>
            <person name="Zhao W."/>
            <person name="Sun Y."/>
            <person name="Zhang Z."/>
            <person name="Bao J."/>
            <person name="Han Y."/>
            <person name="Dong L."/>
            <person name="Ji J."/>
            <person name="Chen P."/>
            <person name="Wu S."/>
            <person name="Liu J."/>
            <person name="Xiao Y."/>
            <person name="Bu D."/>
            <person name="Tan J."/>
            <person name="Yang L."/>
            <person name="Ye C."/>
            <person name="Zhang J."/>
            <person name="Xu J."/>
            <person name="Zhou Y."/>
            <person name="Yu Y."/>
            <person name="Zhang B."/>
            <person name="Zhuang S."/>
            <person name="Wei H."/>
            <person name="Liu B."/>
            <person name="Lei M."/>
            <person name="Yu H."/>
            <person name="Li Y."/>
            <person name="Xu H."/>
            <person name="Wei S."/>
            <person name="He X."/>
            <person name="Fang L."/>
            <person name="Zhang Z."/>
            <person name="Zhang Y."/>
            <person name="Huang X."/>
            <person name="Su Z."/>
            <person name="Tong W."/>
            <person name="Li J."/>
            <person name="Tong Z."/>
            <person name="Li S."/>
            <person name="Ye J."/>
            <person name="Wang L."/>
            <person name="Fang L."/>
            <person name="Lei T."/>
            <person name="Chen C.-S."/>
            <person name="Chen H.-C."/>
            <person name="Xu Z."/>
            <person name="Li H."/>
            <person name="Huang H."/>
            <person name="Zhang F."/>
            <person name="Xu H."/>
            <person name="Li N."/>
            <person name="Zhao C."/>
            <person name="Li S."/>
            <person name="Dong L."/>
            <person name="Huang Y."/>
            <person name="Li L."/>
            <person name="Xi Y."/>
            <person name="Qi Q."/>
            <person name="Li W."/>
            <person name="Zhang B."/>
            <person name="Hu W."/>
            <person name="Zhang Y."/>
            <person name="Tian X."/>
            <person name="Jiao Y."/>
            <person name="Liang X."/>
            <person name="Jin J."/>
            <person name="Gao L."/>
            <person name="Zheng W."/>
            <person name="Hao B."/>
            <person name="Liu S.-M."/>
            <person name="Wang W."/>
            <person name="Yuan L."/>
            <person name="Cao M."/>
            <person name="McDermott J."/>
            <person name="Samudrala R."/>
            <person name="Wang J."/>
            <person name="Wong G.K.-S."/>
            <person name="Yang H."/>
        </authorList>
    </citation>
    <scope>NUCLEOTIDE SEQUENCE [LARGE SCALE GENOMIC DNA]</scope>
    <source>
        <strain>cv. Nipponbare</strain>
    </source>
</reference>
<reference key="6">
    <citation type="journal article" date="2003" name="Science">
        <title>Collection, mapping, and annotation of over 28,000 cDNA clones from japonica rice.</title>
        <authorList>
            <consortium name="The rice full-length cDNA consortium"/>
        </authorList>
    </citation>
    <scope>NUCLEOTIDE SEQUENCE [LARGE SCALE MRNA]</scope>
    <source>
        <strain>cv. Nipponbare</strain>
    </source>
</reference>
<comment type="function">
    <text>Actins are highly conserved proteins that are involved in various types of cell motility and are ubiquitously expressed in all eukaryotic cells.</text>
</comment>
<comment type="function">
    <text>Essential component of cell cytoskeleton; plays an important role in cytoplasmic streaming, cell shape determination, cell division, organelle movement and extension growth.</text>
</comment>
<comment type="catalytic activity">
    <reaction evidence="1">
        <text>ATP + H2O = ADP + phosphate + H(+)</text>
        <dbReference type="Rhea" id="RHEA:13065"/>
        <dbReference type="ChEBI" id="CHEBI:15377"/>
        <dbReference type="ChEBI" id="CHEBI:15378"/>
        <dbReference type="ChEBI" id="CHEBI:30616"/>
        <dbReference type="ChEBI" id="CHEBI:43474"/>
        <dbReference type="ChEBI" id="CHEBI:456216"/>
    </reaction>
</comment>
<comment type="subcellular location">
    <subcellularLocation>
        <location>Cytoplasm</location>
        <location>Cytoskeleton</location>
    </subcellularLocation>
</comment>
<comment type="miscellaneous">
    <text>There are at least eight actin genes in rice.</text>
</comment>
<comment type="similarity">
    <text evidence="2">Belongs to the actin family.</text>
</comment>
<proteinExistence type="evidence at transcript level"/>
<dbReference type="EC" id="3.6.4.-" evidence="1"/>
<dbReference type="EMBL" id="AC087192">
    <property type="protein sequence ID" value="AAK84456.1"/>
    <property type="molecule type" value="Genomic_DNA"/>
</dbReference>
<dbReference type="EMBL" id="DP000086">
    <property type="protein sequence ID" value="AAP54566.1"/>
    <property type="molecule type" value="Genomic_DNA"/>
</dbReference>
<dbReference type="EMBL" id="AP008216">
    <property type="protein sequence ID" value="BAF26948.1"/>
    <property type="molecule type" value="Genomic_DNA"/>
</dbReference>
<dbReference type="EMBL" id="AP014966">
    <property type="protein sequence ID" value="BAT11611.1"/>
    <property type="molecule type" value="Genomic_DNA"/>
</dbReference>
<dbReference type="EMBL" id="CM000147">
    <property type="protein sequence ID" value="EAZ16650.1"/>
    <property type="molecule type" value="Genomic_DNA"/>
</dbReference>
<dbReference type="EMBL" id="AK070531">
    <property type="status" value="NOT_ANNOTATED_CDS"/>
    <property type="molecule type" value="mRNA"/>
</dbReference>
<dbReference type="RefSeq" id="XP_015614904.1">
    <property type="nucleotide sequence ID" value="XM_015759418.1"/>
</dbReference>
<dbReference type="SMR" id="A3C6D7"/>
<dbReference type="FunCoup" id="A3C6D7">
    <property type="interactions" value="2353"/>
</dbReference>
<dbReference type="STRING" id="39947.A3C6D7"/>
<dbReference type="PaxDb" id="39947-A3C6D7"/>
<dbReference type="EnsemblPlants" id="Os10t0510000-01">
    <property type="protein sequence ID" value="Os10t0510000-01"/>
    <property type="gene ID" value="Os10g0510000"/>
</dbReference>
<dbReference type="Gramene" id="Os10t0510000-01">
    <property type="protein sequence ID" value="Os10t0510000-01"/>
    <property type="gene ID" value="Os10g0510000"/>
</dbReference>
<dbReference type="KEGG" id="dosa:Os10g0510000"/>
<dbReference type="eggNOG" id="KOG0676">
    <property type="taxonomic scope" value="Eukaryota"/>
</dbReference>
<dbReference type="HOGENOM" id="CLU_027965_0_2_1"/>
<dbReference type="InParanoid" id="A3C6D7"/>
<dbReference type="OMA" id="ESCEAAP"/>
<dbReference type="OrthoDB" id="503831at2759"/>
<dbReference type="Proteomes" id="UP000000763">
    <property type="component" value="Chromosome 10"/>
</dbReference>
<dbReference type="Proteomes" id="UP000007752">
    <property type="component" value="Chromosome 10"/>
</dbReference>
<dbReference type="Proteomes" id="UP000059680">
    <property type="component" value="Chromosome 10"/>
</dbReference>
<dbReference type="GO" id="GO:0005737">
    <property type="term" value="C:cytoplasm"/>
    <property type="evidence" value="ECO:0007669"/>
    <property type="project" value="UniProtKB-KW"/>
</dbReference>
<dbReference type="GO" id="GO:0005856">
    <property type="term" value="C:cytoskeleton"/>
    <property type="evidence" value="ECO:0007669"/>
    <property type="project" value="UniProtKB-SubCell"/>
</dbReference>
<dbReference type="GO" id="GO:0005524">
    <property type="term" value="F:ATP binding"/>
    <property type="evidence" value="ECO:0007669"/>
    <property type="project" value="UniProtKB-KW"/>
</dbReference>
<dbReference type="GO" id="GO:0016787">
    <property type="term" value="F:hydrolase activity"/>
    <property type="evidence" value="ECO:0007669"/>
    <property type="project" value="UniProtKB-KW"/>
</dbReference>
<dbReference type="CDD" id="cd10224">
    <property type="entry name" value="ASKHA_NBD_actin"/>
    <property type="match status" value="1"/>
</dbReference>
<dbReference type="FunFam" id="2.30.36.70:FF:000001">
    <property type="entry name" value="Actin, alpha skeletal muscle"/>
    <property type="match status" value="1"/>
</dbReference>
<dbReference type="FunFam" id="3.30.420.40:FF:000291">
    <property type="entry name" value="Actin, alpha skeletal muscle"/>
    <property type="match status" value="1"/>
</dbReference>
<dbReference type="FunFam" id="3.90.640.10:FF:000001">
    <property type="entry name" value="Actin, muscle"/>
    <property type="match status" value="1"/>
</dbReference>
<dbReference type="FunFam" id="3.30.420.40:FF:000404">
    <property type="entry name" value="Major actin"/>
    <property type="match status" value="1"/>
</dbReference>
<dbReference type="FunFam" id="3.30.420.40:FF:000058">
    <property type="entry name" value="Putative actin-related protein 5"/>
    <property type="match status" value="1"/>
</dbReference>
<dbReference type="Gene3D" id="3.30.420.40">
    <property type="match status" value="2"/>
</dbReference>
<dbReference type="Gene3D" id="3.90.640.10">
    <property type="entry name" value="Actin, Chain A, domain 4"/>
    <property type="match status" value="1"/>
</dbReference>
<dbReference type="InterPro" id="IPR004000">
    <property type="entry name" value="Actin"/>
</dbReference>
<dbReference type="InterPro" id="IPR020902">
    <property type="entry name" value="Actin/actin-like_CS"/>
</dbReference>
<dbReference type="InterPro" id="IPR004001">
    <property type="entry name" value="Actin_CS"/>
</dbReference>
<dbReference type="InterPro" id="IPR043129">
    <property type="entry name" value="ATPase_NBD"/>
</dbReference>
<dbReference type="PANTHER" id="PTHR11937">
    <property type="entry name" value="ACTIN"/>
    <property type="match status" value="1"/>
</dbReference>
<dbReference type="Pfam" id="PF00022">
    <property type="entry name" value="Actin"/>
    <property type="match status" value="1"/>
</dbReference>
<dbReference type="PRINTS" id="PR00190">
    <property type="entry name" value="ACTIN"/>
</dbReference>
<dbReference type="SMART" id="SM00268">
    <property type="entry name" value="ACTIN"/>
    <property type="match status" value="1"/>
</dbReference>
<dbReference type="SUPFAM" id="SSF53067">
    <property type="entry name" value="Actin-like ATPase domain"/>
    <property type="match status" value="2"/>
</dbReference>
<dbReference type="PROSITE" id="PS00406">
    <property type="entry name" value="ACTINS_1"/>
    <property type="match status" value="1"/>
</dbReference>
<dbReference type="PROSITE" id="PS00432">
    <property type="entry name" value="ACTINS_2"/>
    <property type="match status" value="1"/>
</dbReference>
<dbReference type="PROSITE" id="PS01132">
    <property type="entry name" value="ACTINS_ACT_LIKE"/>
    <property type="match status" value="1"/>
</dbReference>